<name>RL13_STAES</name>
<protein>
    <recommendedName>
        <fullName evidence="1">Large ribosomal subunit protein uL13</fullName>
    </recommendedName>
    <alternativeName>
        <fullName evidence="3">50S ribosomal protein L13</fullName>
    </alternativeName>
</protein>
<sequence>MRQTFMANESNIERKWYVIDAEGQTLGRLSSEVAAILRGKNKVTYTPHVDTGDYVIIINASKIEFTGNKEQDKMYHRHSNHPGGLKSISAGELKRTNPERLLETSIKGMLPSTRLGEKQGKKLFVYGGAEHPHAAQQPENYELRG</sequence>
<reference key="1">
    <citation type="journal article" date="2003" name="Mol. Microbiol.">
        <title>Genome-based analysis of virulence genes in a non-biofilm-forming Staphylococcus epidermidis strain (ATCC 12228).</title>
        <authorList>
            <person name="Zhang Y.-Q."/>
            <person name="Ren S.-X."/>
            <person name="Li H.-L."/>
            <person name="Wang Y.-X."/>
            <person name="Fu G."/>
            <person name="Yang J."/>
            <person name="Qin Z.-Q."/>
            <person name="Miao Y.-G."/>
            <person name="Wang W.-Y."/>
            <person name="Chen R.-S."/>
            <person name="Shen Y."/>
            <person name="Chen Z."/>
            <person name="Yuan Z.-H."/>
            <person name="Zhao G.-P."/>
            <person name="Qu D."/>
            <person name="Danchin A."/>
            <person name="Wen Y.-M."/>
        </authorList>
    </citation>
    <scope>NUCLEOTIDE SEQUENCE [LARGE SCALE GENOMIC DNA]</scope>
    <source>
        <strain>ATCC 12228 / FDA PCI 1200</strain>
    </source>
</reference>
<comment type="function">
    <text evidence="1">This protein is one of the early assembly proteins of the 50S ribosomal subunit, although it is not seen to bind rRNA by itself. It is important during the early stages of 50S assembly.</text>
</comment>
<comment type="subunit">
    <text evidence="1">Part of the 50S ribosomal subunit.</text>
</comment>
<comment type="similarity">
    <text evidence="1">Belongs to the universal ribosomal protein uL13 family.</text>
</comment>
<proteinExistence type="inferred from homology"/>
<dbReference type="EMBL" id="AE015929">
    <property type="protein sequence ID" value="AAO05432.1"/>
    <property type="molecule type" value="Genomic_DNA"/>
</dbReference>
<dbReference type="RefSeq" id="NP_765346.1">
    <property type="nucleotide sequence ID" value="NC_004461.1"/>
</dbReference>
<dbReference type="RefSeq" id="WP_001829751.1">
    <property type="nucleotide sequence ID" value="NZ_WBME01000007.1"/>
</dbReference>
<dbReference type="SMR" id="Q8CRI9"/>
<dbReference type="KEGG" id="sep:SE_1791"/>
<dbReference type="PATRIC" id="fig|176280.10.peg.1748"/>
<dbReference type="eggNOG" id="COG0102">
    <property type="taxonomic scope" value="Bacteria"/>
</dbReference>
<dbReference type="HOGENOM" id="CLU_082184_2_2_9"/>
<dbReference type="OrthoDB" id="9801330at2"/>
<dbReference type="Proteomes" id="UP000001411">
    <property type="component" value="Chromosome"/>
</dbReference>
<dbReference type="GO" id="GO:0022625">
    <property type="term" value="C:cytosolic large ribosomal subunit"/>
    <property type="evidence" value="ECO:0007669"/>
    <property type="project" value="TreeGrafter"/>
</dbReference>
<dbReference type="GO" id="GO:0003729">
    <property type="term" value="F:mRNA binding"/>
    <property type="evidence" value="ECO:0007669"/>
    <property type="project" value="TreeGrafter"/>
</dbReference>
<dbReference type="GO" id="GO:0003735">
    <property type="term" value="F:structural constituent of ribosome"/>
    <property type="evidence" value="ECO:0007669"/>
    <property type="project" value="InterPro"/>
</dbReference>
<dbReference type="GO" id="GO:0017148">
    <property type="term" value="P:negative regulation of translation"/>
    <property type="evidence" value="ECO:0007669"/>
    <property type="project" value="TreeGrafter"/>
</dbReference>
<dbReference type="GO" id="GO:0006412">
    <property type="term" value="P:translation"/>
    <property type="evidence" value="ECO:0007669"/>
    <property type="project" value="UniProtKB-UniRule"/>
</dbReference>
<dbReference type="CDD" id="cd00392">
    <property type="entry name" value="Ribosomal_L13"/>
    <property type="match status" value="1"/>
</dbReference>
<dbReference type="FunFam" id="3.90.1180.10:FF:000001">
    <property type="entry name" value="50S ribosomal protein L13"/>
    <property type="match status" value="1"/>
</dbReference>
<dbReference type="Gene3D" id="3.90.1180.10">
    <property type="entry name" value="Ribosomal protein L13"/>
    <property type="match status" value="1"/>
</dbReference>
<dbReference type="HAMAP" id="MF_01366">
    <property type="entry name" value="Ribosomal_uL13"/>
    <property type="match status" value="1"/>
</dbReference>
<dbReference type="InterPro" id="IPR005822">
    <property type="entry name" value="Ribosomal_uL13"/>
</dbReference>
<dbReference type="InterPro" id="IPR005823">
    <property type="entry name" value="Ribosomal_uL13_bac-type"/>
</dbReference>
<dbReference type="InterPro" id="IPR023563">
    <property type="entry name" value="Ribosomal_uL13_CS"/>
</dbReference>
<dbReference type="InterPro" id="IPR036899">
    <property type="entry name" value="Ribosomal_uL13_sf"/>
</dbReference>
<dbReference type="NCBIfam" id="TIGR01066">
    <property type="entry name" value="rplM_bact"/>
    <property type="match status" value="1"/>
</dbReference>
<dbReference type="PANTHER" id="PTHR11545:SF2">
    <property type="entry name" value="LARGE RIBOSOMAL SUBUNIT PROTEIN UL13M"/>
    <property type="match status" value="1"/>
</dbReference>
<dbReference type="PANTHER" id="PTHR11545">
    <property type="entry name" value="RIBOSOMAL PROTEIN L13"/>
    <property type="match status" value="1"/>
</dbReference>
<dbReference type="Pfam" id="PF00572">
    <property type="entry name" value="Ribosomal_L13"/>
    <property type="match status" value="1"/>
</dbReference>
<dbReference type="PIRSF" id="PIRSF002181">
    <property type="entry name" value="Ribosomal_L13"/>
    <property type="match status" value="1"/>
</dbReference>
<dbReference type="SUPFAM" id="SSF52161">
    <property type="entry name" value="Ribosomal protein L13"/>
    <property type="match status" value="1"/>
</dbReference>
<dbReference type="PROSITE" id="PS00783">
    <property type="entry name" value="RIBOSOMAL_L13"/>
    <property type="match status" value="1"/>
</dbReference>
<feature type="chain" id="PRO_0000223981" description="Large ribosomal subunit protein uL13">
    <location>
        <begin position="1"/>
        <end position="145"/>
    </location>
</feature>
<feature type="region of interest" description="Disordered" evidence="2">
    <location>
        <begin position="72"/>
        <end position="91"/>
    </location>
</feature>
<gene>
    <name evidence="1" type="primary">rplM</name>
    <name type="ordered locus">SE_1791</name>
</gene>
<keyword id="KW-0687">Ribonucleoprotein</keyword>
<keyword id="KW-0689">Ribosomal protein</keyword>
<accession>Q8CRI9</accession>
<organism>
    <name type="scientific">Staphylococcus epidermidis (strain ATCC 12228 / FDA PCI 1200)</name>
    <dbReference type="NCBI Taxonomy" id="176280"/>
    <lineage>
        <taxon>Bacteria</taxon>
        <taxon>Bacillati</taxon>
        <taxon>Bacillota</taxon>
        <taxon>Bacilli</taxon>
        <taxon>Bacillales</taxon>
        <taxon>Staphylococcaceae</taxon>
        <taxon>Staphylococcus</taxon>
    </lineage>
</organism>
<evidence type="ECO:0000255" key="1">
    <source>
        <dbReference type="HAMAP-Rule" id="MF_01366"/>
    </source>
</evidence>
<evidence type="ECO:0000256" key="2">
    <source>
        <dbReference type="SAM" id="MobiDB-lite"/>
    </source>
</evidence>
<evidence type="ECO:0000305" key="3"/>